<protein>
    <recommendedName>
        <fullName>Cytochrome c551 peroxidase</fullName>
        <shortName>Cytochrome c peroxidase</shortName>
        <ecNumber>1.11.1.5</ecNumber>
    </recommendedName>
</protein>
<name>CCPR_NITEU</name>
<reference key="1">
    <citation type="journal article" date="2003" name="J. Bacteriol.">
        <title>Complete genome sequence of the ammonia-oxidizing bacterium and obligate chemolithoautotroph Nitrosomonas europaea.</title>
        <authorList>
            <person name="Chain P."/>
            <person name="Lamerdin J.E."/>
            <person name="Larimer F.W."/>
            <person name="Regala W."/>
            <person name="Lao V."/>
            <person name="Land M.L."/>
            <person name="Hauser L."/>
            <person name="Hooper A.B."/>
            <person name="Klotz M.G."/>
            <person name="Norton J."/>
            <person name="Sayavedra-Soto L.A."/>
            <person name="Arciero D.M."/>
            <person name="Hommes N.G."/>
            <person name="Whittaker M.M."/>
            <person name="Arp D.J."/>
        </authorList>
    </citation>
    <scope>NUCLEOTIDE SEQUENCE [LARGE SCALE GENOMIC DNA]</scope>
    <source>
        <strain>ATCC 19718 / CIP 103999 / KCTC 2705 / NBRC 14298</strain>
    </source>
</reference>
<reference key="2">
    <citation type="journal article" date="1994" name="J. Biol. Chem.">
        <title>A di-heme cytochrome c peroxidase from Nitrosomonas europaea catalytically active in both the oxidized and half-reduced states.</title>
        <authorList>
            <person name="Arciero D.M."/>
            <person name="Hooper A.B."/>
        </authorList>
    </citation>
    <scope>PROTEIN SEQUENCE OF 27-55; 60-86 AND 206-225</scope>
    <source>
        <strain>ATCC 19718 / CIP 103999 / KCTC 2705 / NBRC 14298</strain>
    </source>
</reference>
<evidence type="ECO:0000255" key="1">
    <source>
        <dbReference type="PROSITE-ProRule" id="PRU00433"/>
    </source>
</evidence>
<evidence type="ECO:0000256" key="2">
    <source>
        <dbReference type="SAM" id="MobiDB-lite"/>
    </source>
</evidence>
<evidence type="ECO:0000269" key="3">
    <source>
    </source>
</evidence>
<evidence type="ECO:0000305" key="4"/>
<evidence type="ECO:0007829" key="5">
    <source>
        <dbReference type="PDB" id="1IQC"/>
    </source>
</evidence>
<dbReference type="EC" id="1.11.1.5"/>
<dbReference type="EMBL" id="AL954747">
    <property type="protein sequence ID" value="CAD85226.1"/>
    <property type="molecule type" value="Genomic_DNA"/>
</dbReference>
<dbReference type="PIR" id="A53573">
    <property type="entry name" value="A53573"/>
</dbReference>
<dbReference type="RefSeq" id="WP_011111893.1">
    <property type="nucleotide sequence ID" value="NC_004757.1"/>
</dbReference>
<dbReference type="PDB" id="1IQC">
    <property type="method" value="X-ray"/>
    <property type="resolution" value="1.80 A"/>
    <property type="chains" value="A/B/C/D=27-334"/>
</dbReference>
<dbReference type="PDBsum" id="1IQC"/>
<dbReference type="SMR" id="P55929"/>
<dbReference type="STRING" id="228410.NE1315"/>
<dbReference type="PeroxiBase" id="5004">
    <property type="entry name" value="NeDiHCcP"/>
</dbReference>
<dbReference type="GeneID" id="87104491"/>
<dbReference type="KEGG" id="neu:NE1315"/>
<dbReference type="eggNOG" id="COG1858">
    <property type="taxonomic scope" value="Bacteria"/>
</dbReference>
<dbReference type="HOGENOM" id="CLU_034652_1_0_4"/>
<dbReference type="OrthoDB" id="9805202at2"/>
<dbReference type="PhylomeDB" id="P55929"/>
<dbReference type="BRENDA" id="1.11.1.5">
    <property type="organism ID" value="3654"/>
</dbReference>
<dbReference type="EvolutionaryTrace" id="P55929"/>
<dbReference type="Proteomes" id="UP000001416">
    <property type="component" value="Chromosome"/>
</dbReference>
<dbReference type="GO" id="GO:0042597">
    <property type="term" value="C:periplasmic space"/>
    <property type="evidence" value="ECO:0007669"/>
    <property type="project" value="UniProtKB-SubCell"/>
</dbReference>
<dbReference type="GO" id="GO:0004130">
    <property type="term" value="F:cytochrome-c peroxidase activity"/>
    <property type="evidence" value="ECO:0007669"/>
    <property type="project" value="UniProtKB-EC"/>
</dbReference>
<dbReference type="GO" id="GO:0009055">
    <property type="term" value="F:electron transfer activity"/>
    <property type="evidence" value="ECO:0007669"/>
    <property type="project" value="InterPro"/>
</dbReference>
<dbReference type="GO" id="GO:0020037">
    <property type="term" value="F:heme binding"/>
    <property type="evidence" value="ECO:0007669"/>
    <property type="project" value="InterPro"/>
</dbReference>
<dbReference type="GO" id="GO:0046872">
    <property type="term" value="F:metal ion binding"/>
    <property type="evidence" value="ECO:0007669"/>
    <property type="project" value="UniProtKB-KW"/>
</dbReference>
<dbReference type="FunFam" id="1.10.760.10:FF:000004">
    <property type="entry name" value="Cytochrome c peroxidase"/>
    <property type="match status" value="1"/>
</dbReference>
<dbReference type="Gene3D" id="1.10.760.10">
    <property type="entry name" value="Cytochrome c-like domain"/>
    <property type="match status" value="2"/>
</dbReference>
<dbReference type="InterPro" id="IPR009056">
    <property type="entry name" value="Cyt_c-like_dom"/>
</dbReference>
<dbReference type="InterPro" id="IPR036909">
    <property type="entry name" value="Cyt_c-like_dom_sf"/>
</dbReference>
<dbReference type="InterPro" id="IPR051395">
    <property type="entry name" value="Cytochrome_c_Peroxidase/MauG"/>
</dbReference>
<dbReference type="InterPro" id="IPR004852">
    <property type="entry name" value="Di-haem_cyt_c_peroxidsae"/>
</dbReference>
<dbReference type="InterPro" id="IPR026259">
    <property type="entry name" value="MauG/Cytc_peroxidase"/>
</dbReference>
<dbReference type="PANTHER" id="PTHR30600">
    <property type="entry name" value="CYTOCHROME C PEROXIDASE-RELATED"/>
    <property type="match status" value="1"/>
</dbReference>
<dbReference type="PANTHER" id="PTHR30600:SF7">
    <property type="entry name" value="CYTOCHROME C PEROXIDASE-RELATED"/>
    <property type="match status" value="1"/>
</dbReference>
<dbReference type="Pfam" id="PF03150">
    <property type="entry name" value="CCP_MauG"/>
    <property type="match status" value="1"/>
</dbReference>
<dbReference type="PIRSF" id="PIRSF000294">
    <property type="entry name" value="Cytochrome-c_peroxidase"/>
    <property type="match status" value="1"/>
</dbReference>
<dbReference type="SUPFAM" id="SSF46626">
    <property type="entry name" value="Cytochrome c"/>
    <property type="match status" value="2"/>
</dbReference>
<dbReference type="PROSITE" id="PS51007">
    <property type="entry name" value="CYTC"/>
    <property type="match status" value="2"/>
</dbReference>
<comment type="catalytic activity">
    <reaction>
        <text>2 Fe(II)-[cytochrome c] + H2O2 + 2 H(+) = 2 Fe(III)-[cytochrome c] + 2 H2O</text>
        <dbReference type="Rhea" id="RHEA:16581"/>
        <dbReference type="Rhea" id="RHEA-COMP:10350"/>
        <dbReference type="Rhea" id="RHEA-COMP:14399"/>
        <dbReference type="ChEBI" id="CHEBI:15377"/>
        <dbReference type="ChEBI" id="CHEBI:15378"/>
        <dbReference type="ChEBI" id="CHEBI:16240"/>
        <dbReference type="ChEBI" id="CHEBI:29033"/>
        <dbReference type="ChEBI" id="CHEBI:29034"/>
        <dbReference type="EC" id="1.11.1.5"/>
    </reaction>
</comment>
<comment type="biophysicochemical properties">
    <redoxPotential>
        <text>E(0) are +450 mV (low spin) and -260 mV (high spin).</text>
    </redoxPotential>
</comment>
<comment type="subcellular location">
    <subcellularLocation>
        <location evidence="4">Periplasm</location>
    </subcellularLocation>
</comment>
<comment type="PTM">
    <text>Binds 2 heme c groups covalently per subunit.</text>
</comment>
<feature type="signal peptide" evidence="3">
    <location>
        <begin position="1"/>
        <end position="26"/>
    </location>
</feature>
<feature type="chain" id="PRO_0000006599" description="Cytochrome c551 peroxidase">
    <location>
        <begin position="27"/>
        <end position="334"/>
    </location>
</feature>
<feature type="region of interest" description="Disordered" evidence="2">
    <location>
        <begin position="315"/>
        <end position="334"/>
    </location>
</feature>
<feature type="compositionally biased region" description="Polar residues" evidence="2">
    <location>
        <begin position="322"/>
        <end position="334"/>
    </location>
</feature>
<feature type="binding site" description="covalent" evidence="1">
    <location>
        <position position="65"/>
    </location>
    <ligand>
        <name>heme c</name>
        <dbReference type="ChEBI" id="CHEBI:61717"/>
        <label>1</label>
    </ligand>
</feature>
<feature type="binding site" description="covalent" evidence="1">
    <location>
        <position position="68"/>
    </location>
    <ligand>
        <name>heme c</name>
        <dbReference type="ChEBI" id="CHEBI:61717"/>
        <label>1</label>
    </ligand>
</feature>
<feature type="binding site" description="axial binding residue" evidence="1">
    <location>
        <position position="69"/>
    </location>
    <ligand>
        <name>heme c</name>
        <dbReference type="ChEBI" id="CHEBI:61717"/>
        <label>1</label>
    </ligand>
    <ligandPart>
        <name>Fe</name>
        <dbReference type="ChEBI" id="CHEBI:18248"/>
    </ligandPart>
</feature>
<feature type="binding site" description="covalent" evidence="1">
    <location>
        <position position="209"/>
    </location>
    <ligand>
        <name>heme c</name>
        <dbReference type="ChEBI" id="CHEBI:61717"/>
        <label>2</label>
    </ligand>
</feature>
<feature type="binding site" description="covalent" evidence="1">
    <location>
        <position position="212"/>
    </location>
    <ligand>
        <name>heme c</name>
        <dbReference type="ChEBI" id="CHEBI:61717"/>
        <label>2</label>
    </ligand>
</feature>
<feature type="binding site" description="axial binding residue" evidence="1">
    <location>
        <position position="213"/>
    </location>
    <ligand>
        <name>heme c</name>
        <dbReference type="ChEBI" id="CHEBI:61717"/>
        <label>2</label>
    </ligand>
    <ligandPart>
        <name>Fe</name>
        <dbReference type="ChEBI" id="CHEBI:18248"/>
    </ligandPart>
</feature>
<feature type="binding site" description="axial binding residue" evidence="1">
    <location>
        <position position="270"/>
    </location>
    <ligand>
        <name>heme c</name>
        <dbReference type="ChEBI" id="CHEBI:61717"/>
        <label>1</label>
    </ligand>
    <ligandPart>
        <name>Fe</name>
        <dbReference type="ChEBI" id="CHEBI:18248"/>
    </ligandPart>
</feature>
<feature type="binding site" description="axial binding residue" evidence="1">
    <location>
        <position position="284"/>
    </location>
    <ligand>
        <name>heme c</name>
        <dbReference type="ChEBI" id="CHEBI:61717"/>
        <label>2</label>
    </ligand>
    <ligandPart>
        <name>Fe</name>
        <dbReference type="ChEBI" id="CHEBI:18248"/>
    </ligandPart>
</feature>
<feature type="sequence conflict" description="In Ref. 2; AA sequence." evidence="4" ref="2">
    <original>D</original>
    <variation>C</variation>
    <location>
        <position position="77"/>
    </location>
</feature>
<feature type="helix" evidence="5">
    <location>
        <begin position="42"/>
        <end position="52"/>
    </location>
</feature>
<feature type="helix" evidence="5">
    <location>
        <begin position="55"/>
        <end position="57"/>
    </location>
</feature>
<feature type="strand" evidence="5">
    <location>
        <begin position="58"/>
        <end position="61"/>
    </location>
</feature>
<feature type="helix" evidence="5">
    <location>
        <begin position="65"/>
        <end position="68"/>
    </location>
</feature>
<feature type="turn" evidence="5">
    <location>
        <begin position="71"/>
        <end position="74"/>
    </location>
</feature>
<feature type="strand" evidence="5">
    <location>
        <begin position="79"/>
        <end position="81"/>
    </location>
</feature>
<feature type="helix" evidence="5">
    <location>
        <begin position="85"/>
        <end position="87"/>
    </location>
</feature>
<feature type="helix" evidence="5">
    <location>
        <begin position="100"/>
        <end position="102"/>
    </location>
</feature>
<feature type="strand" evidence="5">
    <location>
        <begin position="104"/>
        <end position="107"/>
    </location>
</feature>
<feature type="strand" evidence="5">
    <location>
        <begin position="112"/>
        <end position="114"/>
    </location>
</feature>
<feature type="helix" evidence="5">
    <location>
        <begin position="115"/>
        <end position="124"/>
    </location>
</feature>
<feature type="turn" evidence="5">
    <location>
        <begin position="126"/>
        <end position="129"/>
    </location>
</feature>
<feature type="helix" evidence="5">
    <location>
        <begin position="133"/>
        <end position="141"/>
    </location>
</feature>
<feature type="helix" evidence="5">
    <location>
        <begin position="144"/>
        <end position="154"/>
    </location>
</feature>
<feature type="helix" evidence="5">
    <location>
        <begin position="161"/>
        <end position="173"/>
    </location>
</feature>
<feature type="helix" evidence="5">
    <location>
        <begin position="181"/>
        <end position="186"/>
    </location>
</feature>
<feature type="helix" evidence="5">
    <location>
        <begin position="195"/>
        <end position="207"/>
    </location>
</feature>
<feature type="helix" evidence="5">
    <location>
        <begin position="209"/>
        <end position="211"/>
    </location>
</feature>
<feature type="turn" evidence="5">
    <location>
        <begin position="215"/>
        <end position="218"/>
    </location>
</feature>
<feature type="strand" evidence="5">
    <location>
        <begin position="221"/>
        <end position="226"/>
    </location>
</feature>
<feature type="strand" evidence="5">
    <location>
        <begin position="228"/>
        <end position="230"/>
    </location>
</feature>
<feature type="helix" evidence="5">
    <location>
        <begin position="242"/>
        <end position="245"/>
    </location>
</feature>
<feature type="helix" evidence="5">
    <location>
        <begin position="248"/>
        <end position="250"/>
    </location>
</feature>
<feature type="strand" evidence="5">
    <location>
        <begin position="253"/>
        <end position="255"/>
    </location>
</feature>
<feature type="helix" evidence="5">
    <location>
        <begin position="262"/>
        <end position="264"/>
    </location>
</feature>
<feature type="strand" evidence="5">
    <location>
        <begin position="267"/>
        <end position="269"/>
    </location>
</feature>
<feature type="helix" evidence="5">
    <location>
        <begin position="277"/>
        <end position="289"/>
    </location>
</feature>
<feature type="helix" evidence="5">
    <location>
        <begin position="295"/>
        <end position="306"/>
    </location>
</feature>
<proteinExistence type="evidence at protein level"/>
<keyword id="KW-0002">3D-structure</keyword>
<keyword id="KW-0903">Direct protein sequencing</keyword>
<keyword id="KW-0249">Electron transport</keyword>
<keyword id="KW-0349">Heme</keyword>
<keyword id="KW-0408">Iron</keyword>
<keyword id="KW-0479">Metal-binding</keyword>
<keyword id="KW-0560">Oxidoreductase</keyword>
<keyword id="KW-0574">Periplasm</keyword>
<keyword id="KW-0575">Peroxidase</keyword>
<keyword id="KW-1185">Reference proteome</keyword>
<keyword id="KW-0677">Repeat</keyword>
<keyword id="KW-0732">Signal</keyword>
<keyword id="KW-0813">Transport</keyword>
<organism>
    <name type="scientific">Nitrosomonas europaea (strain ATCC 19718 / CIP 103999 / KCTC 2705 / NBRC 14298)</name>
    <dbReference type="NCBI Taxonomy" id="228410"/>
    <lineage>
        <taxon>Bacteria</taxon>
        <taxon>Pseudomonadati</taxon>
        <taxon>Pseudomonadota</taxon>
        <taxon>Betaproteobacteria</taxon>
        <taxon>Nitrosomonadales</taxon>
        <taxon>Nitrosomonadaceae</taxon>
        <taxon>Nitrosomonas</taxon>
    </lineage>
</organism>
<accession>P55929</accession>
<sequence length="334" mass="36633">MIKRTLTVSLLSLSLGAMFASAGVMAANEPIQPIKAVTPENADMAELGKMLFFDPRLSKSGFISCNSCHNLSMGGTDNITTSIGHKWQQGPINAPTVLNSSMNLAQFWDGRAKDLKEQAAGPIANPKEMASTHEIAEKVVASMPQYRERFKKVFGSDEVTIDRITTAIAQFEETLVTPGSKFDKWLEGDKNALNQDELEGYNLFKGSGCVQCHNGPAVGGSSYQKMGVFKPYETKNPAAGRMDVTGNEADRNVFKVPTLRNIELTYPYFHDGGAATLEQAVETMGRIQLNREFNKDEVSKIVAFLKTLTGDQPDFKLPILPPSNNDTPRSQPYE</sequence>
<gene>
    <name type="primary">ccp</name>
    <name type="ordered locus">NE1315</name>
</gene>